<keyword id="KW-0046">Antibiotic resistance</keyword>
<keyword id="KW-0997">Cell inner membrane</keyword>
<keyword id="KW-1003">Cell membrane</keyword>
<keyword id="KW-0175">Coiled coil</keyword>
<keyword id="KW-0472">Membrane</keyword>
<keyword id="KW-1185">Reference proteome</keyword>
<keyword id="KW-0812">Transmembrane</keyword>
<keyword id="KW-1133">Transmembrane helix</keyword>
<keyword id="KW-0813">Transport</keyword>
<dbReference type="EMBL" id="AE005174">
    <property type="protein sequence ID" value="AAG55260.1"/>
    <property type="status" value="ALT_INIT"/>
    <property type="molecule type" value="Genomic_DNA"/>
</dbReference>
<dbReference type="EMBL" id="BA000007">
    <property type="protein sequence ID" value="BAB34387.1"/>
    <property type="status" value="ALT_INIT"/>
    <property type="molecule type" value="Genomic_DNA"/>
</dbReference>
<dbReference type="PIR" id="D90749">
    <property type="entry name" value="D90749"/>
</dbReference>
<dbReference type="PIR" id="H85599">
    <property type="entry name" value="H85599"/>
</dbReference>
<dbReference type="RefSeq" id="NP_308991.2">
    <property type="nucleotide sequence ID" value="NC_002695.1"/>
</dbReference>
<dbReference type="RefSeq" id="WP_000746446.1">
    <property type="nucleotide sequence ID" value="NZ_VOAI01000006.1"/>
</dbReference>
<dbReference type="SMR" id="P64176"/>
<dbReference type="STRING" id="155864.Z1115"/>
<dbReference type="GeneID" id="917702"/>
<dbReference type="KEGG" id="ece:Z1115"/>
<dbReference type="KEGG" id="ecs:ECs_0964"/>
<dbReference type="PATRIC" id="fig|386585.9.peg.1080"/>
<dbReference type="eggNOG" id="COG0845">
    <property type="taxonomic scope" value="Bacteria"/>
</dbReference>
<dbReference type="HOGENOM" id="CLU_018816_14_1_6"/>
<dbReference type="OMA" id="MAYGVFR"/>
<dbReference type="Proteomes" id="UP000000558">
    <property type="component" value="Chromosome"/>
</dbReference>
<dbReference type="Proteomes" id="UP000002519">
    <property type="component" value="Chromosome"/>
</dbReference>
<dbReference type="GO" id="GO:1990281">
    <property type="term" value="C:efflux pump complex"/>
    <property type="evidence" value="ECO:0007669"/>
    <property type="project" value="TreeGrafter"/>
</dbReference>
<dbReference type="GO" id="GO:0019898">
    <property type="term" value="C:extrinsic component of membrane"/>
    <property type="evidence" value="ECO:0007669"/>
    <property type="project" value="InterPro"/>
</dbReference>
<dbReference type="GO" id="GO:1990195">
    <property type="term" value="C:macrolide transmembrane transporter complex"/>
    <property type="evidence" value="ECO:0007669"/>
    <property type="project" value="InterPro"/>
</dbReference>
<dbReference type="GO" id="GO:0005886">
    <property type="term" value="C:plasma membrane"/>
    <property type="evidence" value="ECO:0007669"/>
    <property type="project" value="UniProtKB-SubCell"/>
</dbReference>
<dbReference type="GO" id="GO:0015562">
    <property type="term" value="F:efflux transmembrane transporter activity"/>
    <property type="evidence" value="ECO:0007669"/>
    <property type="project" value="TreeGrafter"/>
</dbReference>
<dbReference type="GO" id="GO:0046677">
    <property type="term" value="P:response to antibiotic"/>
    <property type="evidence" value="ECO:0007669"/>
    <property type="project" value="UniProtKB-KW"/>
</dbReference>
<dbReference type="GO" id="GO:1990961">
    <property type="term" value="P:xenobiotic detoxification by transmembrane export across the plasma membrane"/>
    <property type="evidence" value="ECO:0007669"/>
    <property type="project" value="InterPro"/>
</dbReference>
<dbReference type="FunFam" id="2.40.30.170:FF:000007">
    <property type="entry name" value="Macrolide transporter subunit MacA"/>
    <property type="match status" value="1"/>
</dbReference>
<dbReference type="FunFam" id="2.40.420.20:FF:000004">
    <property type="entry name" value="Macrolide transporter subunit MacA"/>
    <property type="match status" value="1"/>
</dbReference>
<dbReference type="Gene3D" id="2.40.30.170">
    <property type="match status" value="1"/>
</dbReference>
<dbReference type="Gene3D" id="2.40.420.20">
    <property type="match status" value="1"/>
</dbReference>
<dbReference type="Gene3D" id="2.40.50.100">
    <property type="match status" value="1"/>
</dbReference>
<dbReference type="Gene3D" id="6.10.140.1990">
    <property type="match status" value="1"/>
</dbReference>
<dbReference type="InterPro" id="IPR032317">
    <property type="entry name" value="CusB_D23"/>
</dbReference>
<dbReference type="InterPro" id="IPR030190">
    <property type="entry name" value="MacA_alpha-hairpin_sf"/>
</dbReference>
<dbReference type="InterPro" id="IPR006143">
    <property type="entry name" value="RND_pump_MFP"/>
</dbReference>
<dbReference type="NCBIfam" id="NF008606">
    <property type="entry name" value="PRK11578.1"/>
    <property type="match status" value="1"/>
</dbReference>
<dbReference type="NCBIfam" id="TIGR01730">
    <property type="entry name" value="RND_mfp"/>
    <property type="match status" value="1"/>
</dbReference>
<dbReference type="PANTHER" id="PTHR30469:SF34">
    <property type="entry name" value="MACROLIDE EXPORT PROTEIN MACA"/>
    <property type="match status" value="1"/>
</dbReference>
<dbReference type="PANTHER" id="PTHR30469">
    <property type="entry name" value="MULTIDRUG RESISTANCE PROTEIN MDTA"/>
    <property type="match status" value="1"/>
</dbReference>
<dbReference type="Pfam" id="PF16576">
    <property type="entry name" value="HlyD_D23"/>
    <property type="match status" value="1"/>
</dbReference>
<dbReference type="SUPFAM" id="SSF111369">
    <property type="entry name" value="HlyD-like secretion proteins"/>
    <property type="match status" value="1"/>
</dbReference>
<organism>
    <name type="scientific">Escherichia coli O157:H7</name>
    <dbReference type="NCBI Taxonomy" id="83334"/>
    <lineage>
        <taxon>Bacteria</taxon>
        <taxon>Pseudomonadati</taxon>
        <taxon>Pseudomonadota</taxon>
        <taxon>Gammaproteobacteria</taxon>
        <taxon>Enterobacterales</taxon>
        <taxon>Enterobacteriaceae</taxon>
        <taxon>Escherichia</taxon>
    </lineage>
</organism>
<feature type="chain" id="PRO_0000018696" description="Macrolide export protein MacA">
    <location>
        <begin position="1"/>
        <end position="371"/>
    </location>
</feature>
<feature type="topological domain" description="Cytoplasmic" evidence="2">
    <location>
        <begin position="1"/>
        <end position="10"/>
    </location>
</feature>
<feature type="transmembrane region" description="Helical" evidence="2">
    <location>
        <begin position="11"/>
        <end position="31"/>
    </location>
</feature>
<feature type="topological domain" description="Periplasmic" evidence="2">
    <location>
        <begin position="32"/>
        <end position="371"/>
    </location>
</feature>
<feature type="coiled-coil region" evidence="2">
    <location>
        <begin position="92"/>
        <end position="137"/>
    </location>
</feature>
<name>MACA_ECO57</name>
<accession>P64176</accession>
<accession>P58410</accession>
<reference key="1">
    <citation type="journal article" date="2001" name="Nature">
        <title>Genome sequence of enterohaemorrhagic Escherichia coli O157:H7.</title>
        <authorList>
            <person name="Perna N.T."/>
            <person name="Plunkett G. III"/>
            <person name="Burland V."/>
            <person name="Mau B."/>
            <person name="Glasner J.D."/>
            <person name="Rose D.J."/>
            <person name="Mayhew G.F."/>
            <person name="Evans P.S."/>
            <person name="Gregor J."/>
            <person name="Kirkpatrick H.A."/>
            <person name="Posfai G."/>
            <person name="Hackett J."/>
            <person name="Klink S."/>
            <person name="Boutin A."/>
            <person name="Shao Y."/>
            <person name="Miller L."/>
            <person name="Grotbeck E.J."/>
            <person name="Davis N.W."/>
            <person name="Lim A."/>
            <person name="Dimalanta E.T."/>
            <person name="Potamousis K."/>
            <person name="Apodaca J."/>
            <person name="Anantharaman T.S."/>
            <person name="Lin J."/>
            <person name="Yen G."/>
            <person name="Schwartz D.C."/>
            <person name="Welch R.A."/>
            <person name="Blattner F.R."/>
        </authorList>
    </citation>
    <scope>NUCLEOTIDE SEQUENCE [LARGE SCALE GENOMIC DNA]</scope>
    <source>
        <strain>O157:H7 / EDL933 / ATCC 700927 / EHEC</strain>
    </source>
</reference>
<reference key="2">
    <citation type="journal article" date="2001" name="DNA Res.">
        <title>Complete genome sequence of enterohemorrhagic Escherichia coli O157:H7 and genomic comparison with a laboratory strain K-12.</title>
        <authorList>
            <person name="Hayashi T."/>
            <person name="Makino K."/>
            <person name="Ohnishi M."/>
            <person name="Kurokawa K."/>
            <person name="Ishii K."/>
            <person name="Yokoyama K."/>
            <person name="Han C.-G."/>
            <person name="Ohtsubo E."/>
            <person name="Nakayama K."/>
            <person name="Murata T."/>
            <person name="Tanaka M."/>
            <person name="Tobe T."/>
            <person name="Iida T."/>
            <person name="Takami H."/>
            <person name="Honda T."/>
            <person name="Sasakawa C."/>
            <person name="Ogasawara N."/>
            <person name="Yasunaga T."/>
            <person name="Kuhara S."/>
            <person name="Shiba T."/>
            <person name="Hattori M."/>
            <person name="Shinagawa H."/>
        </authorList>
    </citation>
    <scope>NUCLEOTIDE SEQUENCE [LARGE SCALE GENOMIC DNA]</scope>
    <source>
        <strain>O157:H7 / Sakai / RIMD 0509952 / EHEC</strain>
    </source>
</reference>
<sequence>MKKRKTVKKRYVIALVIVIAGLITLWRILNAPVPTYQTLIVRPGDLQQSVLATGKLDALRKVDVGAQVSGQLKTLSVAIGDKVKKDQLLGVIDPEQAENQIKEVEATLMELRAQRQQAEAELKLARVTYSRQQRLAQTQAVSLQDLDTAATEMAVKQAQIGTIDAQIKRNQASLDTAKTNLDYTRIVAPMAGEVTQITTLQGQTVIAAQQAPNILTLADMSTMLVKAQVSEADVIHLKPGQKAWFTVLGDPLTRYEGQIKDVLPTPEKVNDAIFYYARFEVPNPNGLLRLDMTAQVHIQLTDVKNVLTIPLSALGDPVGDNRYKVKLLRNGETREREVTIGARNDTDVEIVKGLEAGDEVVIGEAKPGAAQ</sequence>
<protein>
    <recommendedName>
        <fullName>Macrolide export protein MacA</fullName>
    </recommendedName>
</protein>
<gene>
    <name type="primary">macA</name>
    <name type="ordered locus">Z1115</name>
    <name type="ordered locus">ECs0964</name>
</gene>
<proteinExistence type="inferred from homology"/>
<comment type="function">
    <text evidence="1">Part of the tripartite efflux system MacAB-TolC. MacA stimulates the ATPase activity of MacB by promoting the closed ATP-bound state of MacB, increases the capacity of MacB to bind macrolides such as erythromycin, and provides a physical link between MacB and TolC. Confers resistance against macrolides (By similarity).</text>
</comment>
<comment type="subunit">
    <text evidence="1">Homohexamer. Part of the tripartite efflux system MacAB-TolC, which is composed of an inner membrane transporter, MacB, a periplasmic membrane fusion protein, MacA, and an outer membrane component, TolC. The complex forms a large protein conduit and can translocate molecules across both the inner and outer membranes. MacA interacts with MacB and TolC (By similarity).</text>
</comment>
<comment type="subcellular location">
    <subcellularLocation>
        <location evidence="1">Cell inner membrane</location>
        <topology evidence="1">Single-pass membrane protein</topology>
        <orientation evidence="1">Periplasmic side</orientation>
    </subcellularLocation>
</comment>
<comment type="similarity">
    <text evidence="3">Belongs to the membrane fusion protein (MFP) (TC 8.A.1) family.</text>
</comment>
<comment type="sequence caution" evidence="3">
    <conflict type="erroneous initiation">
        <sequence resource="EMBL-CDS" id="AAG55260"/>
    </conflict>
    <text>Extended N-terminus.</text>
</comment>
<comment type="sequence caution" evidence="3">
    <conflict type="erroneous initiation">
        <sequence resource="EMBL-CDS" id="BAB34387"/>
    </conflict>
    <text>Extended N-terminus.</text>
</comment>
<evidence type="ECO:0000250" key="1"/>
<evidence type="ECO:0000255" key="2"/>
<evidence type="ECO:0000305" key="3"/>